<evidence type="ECO:0000250" key="1"/>
<evidence type="ECO:0000255" key="2"/>
<evidence type="ECO:0000305" key="3"/>
<accession>Q9L6P1</accession>
<comment type="subcellular location">
    <subcellularLocation>
        <location evidence="1">Cell inner membrane</location>
        <topology evidence="1">Multi-pass membrane protein</topology>
    </subcellularLocation>
</comment>
<comment type="similarity">
    <text evidence="3">Belongs to the EamA transporter family.</text>
</comment>
<sequence>MDAKQTRQGVLLALAAYFIWGIAPAYFKLIYYVPADEILTHRVIWSFFFMVALLSVSRQWRQVKRLLKTPKKIFLLALSAVLVGGNWLLFIWAVNNHHMLEASLGYFINPLVNILLGMIFLGERFRRMQWLAVILAVCGVLVQLWTFGSLPIIALGLAFSFAFYGLVRKKIAVEAQTGMLVETLWLLPVAAIYLFGIADSPTSHMGQNALSLNLLLMAAGVVTTIPLLCFTGAATRLRLSTLGFFQYIGPTLMFLLAVTFYGEVPGADKMVTFAFIWVALAIFVMDAIYTQRKK</sequence>
<name>RARD_SALTY</name>
<protein>
    <recommendedName>
        <fullName>Protein RarD</fullName>
    </recommendedName>
</protein>
<feature type="chain" id="PRO_0000108154" description="Protein RarD">
    <location>
        <begin position="1"/>
        <end position="294"/>
    </location>
</feature>
<feature type="topological domain" description="Cytoplasmic" evidence="2">
    <location>
        <begin position="1"/>
        <end position="11"/>
    </location>
</feature>
<feature type="transmembrane region" description="Helical" evidence="2">
    <location>
        <begin position="12"/>
        <end position="34"/>
    </location>
</feature>
<feature type="topological domain" description="Periplasmic" evidence="2">
    <location>
        <begin position="35"/>
        <end position="37"/>
    </location>
</feature>
<feature type="transmembrane region" description="Helical" evidence="2">
    <location>
        <begin position="38"/>
        <end position="60"/>
    </location>
</feature>
<feature type="topological domain" description="Cytoplasmic" evidence="2">
    <location>
        <begin position="61"/>
        <end position="72"/>
    </location>
</feature>
<feature type="transmembrane region" description="Helical" evidence="2">
    <location>
        <begin position="73"/>
        <end position="95"/>
    </location>
</feature>
<feature type="topological domain" description="Periplasmic" evidence="2">
    <location>
        <begin position="96"/>
        <end position="99"/>
    </location>
</feature>
<feature type="transmembrane region" description="Helical" evidence="2">
    <location>
        <begin position="100"/>
        <end position="122"/>
    </location>
</feature>
<feature type="topological domain" description="Cytoplasmic" evidence="2">
    <location>
        <begin position="123"/>
        <end position="128"/>
    </location>
</feature>
<feature type="transmembrane region" description="Helical" evidence="2">
    <location>
        <begin position="129"/>
        <end position="146"/>
    </location>
</feature>
<feature type="topological domain" description="Periplasmic" evidence="2">
    <location>
        <begin position="147"/>
        <end position="149"/>
    </location>
</feature>
<feature type="transmembrane region" description="Helical" evidence="2">
    <location>
        <begin position="150"/>
        <end position="167"/>
    </location>
</feature>
<feature type="topological domain" description="Cytoplasmic" evidence="2">
    <location>
        <begin position="168"/>
        <end position="179"/>
    </location>
</feature>
<feature type="transmembrane region" description="Helical" evidence="2">
    <location>
        <begin position="180"/>
        <end position="197"/>
    </location>
</feature>
<feature type="topological domain" description="Periplasmic" evidence="2">
    <location>
        <begin position="198"/>
        <end position="211"/>
    </location>
</feature>
<feature type="transmembrane region" description="Helical" evidence="2">
    <location>
        <begin position="212"/>
        <end position="234"/>
    </location>
</feature>
<feature type="topological domain" description="Cytoplasmic" evidence="2">
    <location>
        <begin position="235"/>
        <end position="238"/>
    </location>
</feature>
<feature type="transmembrane region" description="Helical" evidence="2">
    <location>
        <begin position="239"/>
        <end position="261"/>
    </location>
</feature>
<feature type="topological domain" description="Periplasmic" evidence="2">
    <location>
        <begin position="262"/>
        <end position="270"/>
    </location>
</feature>
<feature type="transmembrane region" description="Helical" evidence="2">
    <location>
        <begin position="271"/>
        <end position="290"/>
    </location>
</feature>
<feature type="topological domain" description="Cytoplasmic" evidence="2">
    <location>
        <begin position="291"/>
        <end position="294"/>
    </location>
</feature>
<feature type="domain" description="EamA">
    <location>
        <begin position="18"/>
        <end position="145"/>
    </location>
</feature>
<gene>
    <name type="primary">rarD</name>
    <name type="ordered locus">STM3955</name>
    <name type="ORF">STMD1.35</name>
</gene>
<organism>
    <name type="scientific">Salmonella typhimurium (strain LT2 / SGSC1412 / ATCC 700720)</name>
    <dbReference type="NCBI Taxonomy" id="99287"/>
    <lineage>
        <taxon>Bacteria</taxon>
        <taxon>Pseudomonadati</taxon>
        <taxon>Pseudomonadota</taxon>
        <taxon>Gammaproteobacteria</taxon>
        <taxon>Enterobacterales</taxon>
        <taxon>Enterobacteriaceae</taxon>
        <taxon>Salmonella</taxon>
    </lineage>
</organism>
<dbReference type="EMBL" id="AF233324">
    <property type="protein sequence ID" value="AAF33437.1"/>
    <property type="molecule type" value="Genomic_DNA"/>
</dbReference>
<dbReference type="EMBL" id="AE006468">
    <property type="protein sequence ID" value="AAL22799.1"/>
    <property type="molecule type" value="Genomic_DNA"/>
</dbReference>
<dbReference type="RefSeq" id="NP_462840.1">
    <property type="nucleotide sequence ID" value="NC_003197.2"/>
</dbReference>
<dbReference type="RefSeq" id="WP_000339080.1">
    <property type="nucleotide sequence ID" value="NC_003197.2"/>
</dbReference>
<dbReference type="SMR" id="Q9L6P1"/>
<dbReference type="STRING" id="99287.STM3955"/>
<dbReference type="PaxDb" id="99287-STM3955"/>
<dbReference type="GeneID" id="1255481"/>
<dbReference type="KEGG" id="stm:STM3955"/>
<dbReference type="PATRIC" id="fig|99287.12.peg.4173"/>
<dbReference type="HOGENOM" id="CLU_054508_1_0_6"/>
<dbReference type="OMA" id="HRMVWSL"/>
<dbReference type="PhylomeDB" id="Q9L6P1"/>
<dbReference type="BioCyc" id="SENT99287:STM3955-MONOMER"/>
<dbReference type="Proteomes" id="UP000001014">
    <property type="component" value="Chromosome"/>
</dbReference>
<dbReference type="GO" id="GO:0005886">
    <property type="term" value="C:plasma membrane"/>
    <property type="evidence" value="ECO:0000318"/>
    <property type="project" value="GO_Central"/>
</dbReference>
<dbReference type="InterPro" id="IPR000620">
    <property type="entry name" value="EamA_dom"/>
</dbReference>
<dbReference type="InterPro" id="IPR004626">
    <property type="entry name" value="RarD"/>
</dbReference>
<dbReference type="NCBIfam" id="NF011959">
    <property type="entry name" value="PRK15430.1"/>
    <property type="match status" value="1"/>
</dbReference>
<dbReference type="NCBIfam" id="TIGR00688">
    <property type="entry name" value="rarD"/>
    <property type="match status" value="1"/>
</dbReference>
<dbReference type="PANTHER" id="PTHR22911">
    <property type="entry name" value="ACYL-MALONYL CONDENSING ENZYME-RELATED"/>
    <property type="match status" value="1"/>
</dbReference>
<dbReference type="PANTHER" id="PTHR22911:SF137">
    <property type="entry name" value="SOLUTE CARRIER FAMILY 35 MEMBER G2-RELATED"/>
    <property type="match status" value="1"/>
</dbReference>
<dbReference type="Pfam" id="PF00892">
    <property type="entry name" value="EamA"/>
    <property type="match status" value="1"/>
</dbReference>
<dbReference type="SUPFAM" id="SSF103481">
    <property type="entry name" value="Multidrug resistance efflux transporter EmrE"/>
    <property type="match status" value="2"/>
</dbReference>
<reference key="1">
    <citation type="journal article" date="2001" name="Nature">
        <title>Complete genome sequence of Salmonella enterica serovar Typhimurium LT2.</title>
        <authorList>
            <person name="McClelland M."/>
            <person name="Sanderson K.E."/>
            <person name="Spieth J."/>
            <person name="Clifton S.W."/>
            <person name="Latreille P."/>
            <person name="Courtney L."/>
            <person name="Porwollik S."/>
            <person name="Ali J."/>
            <person name="Dante M."/>
            <person name="Du F."/>
            <person name="Hou S."/>
            <person name="Layman D."/>
            <person name="Leonard S."/>
            <person name="Nguyen C."/>
            <person name="Scott K."/>
            <person name="Holmes A."/>
            <person name="Grewal N."/>
            <person name="Mulvaney E."/>
            <person name="Ryan E."/>
            <person name="Sun H."/>
            <person name="Florea L."/>
            <person name="Miller W."/>
            <person name="Stoneking T."/>
            <person name="Nhan M."/>
            <person name="Waterston R."/>
            <person name="Wilson R.K."/>
        </authorList>
    </citation>
    <scope>NUCLEOTIDE SEQUENCE [LARGE SCALE GENOMIC DNA]</scope>
    <source>
        <strain>LT2 / SGSC1412 / ATCC 700720</strain>
    </source>
</reference>
<keyword id="KW-0997">Cell inner membrane</keyword>
<keyword id="KW-1003">Cell membrane</keyword>
<keyword id="KW-0472">Membrane</keyword>
<keyword id="KW-1185">Reference proteome</keyword>
<keyword id="KW-0812">Transmembrane</keyword>
<keyword id="KW-1133">Transmembrane helix</keyword>
<keyword id="KW-0813">Transport</keyword>
<proteinExistence type="inferred from homology"/>